<protein>
    <recommendedName>
        <fullName evidence="3">1-propanol dehydrogenase PduQ</fullName>
        <ecNumber evidence="1">1.1.-.-</ecNumber>
    </recommendedName>
    <alternativeName>
        <fullName>Propanediol utilization protein PduQ</fullName>
    </alternativeName>
</protein>
<reference key="1">
    <citation type="journal article" date="2008" name="J. Biol. Chem.">
        <title>Biochemical and Structural Insights into Bacterial Organelle Form and Biogenesis.</title>
        <authorList>
            <person name="Parsons J.B."/>
            <person name="Dinesh S.D."/>
            <person name="Deery E."/>
            <person name="Leech H.K."/>
            <person name="Brindley A.A."/>
            <person name="Heldt D."/>
            <person name="Frank S."/>
            <person name="Smales C.M."/>
            <person name="Lunsdorf H."/>
            <person name="Rambach A."/>
            <person name="Gass M.H."/>
            <person name="Bleloch A."/>
            <person name="McClean K.J."/>
            <person name="Munro A.W."/>
            <person name="Rigby S.E.J."/>
            <person name="Warren M.J."/>
            <person name="Prentice M.B."/>
        </authorList>
    </citation>
    <scope>NUCLEOTIDE SEQUENCE [GENOMIC DNA]</scope>
    <scope>FUNCTION</scope>
    <scope>PATHWAY</scope>
</reference>
<keyword id="KW-1283">Bacterial microcompartment</keyword>
<keyword id="KW-0408">Iron</keyword>
<keyword id="KW-0520">NAD</keyword>
<keyword id="KW-0560">Oxidoreductase</keyword>
<sequence length="370" mass="39703">MKSFSLQTRLYSGQGSLDVLKRLTNKHIWIICDGFLARSPLIEKLRDALPADNHISIFSDITPDPTINTVVQGIAQMQSLRPDVVIGFGGGSALDAAKAIVWFSRQFGIEIETCVAIPTTSGTGSEVTSACVISDPDKGIKYPLFNNALYPDMAILDPTLVVSVPPAITANTGMDVLTHALEAYVSTKASDFTDALAEKAAQIVFQYLPVAVSKGDCLATRGKMHNASTLAGMAFSQAGLGINHAIAHQLGGQFHLPHGLANALLLTHVIHFNARDPRAAKRYARFAKACHLCPDNANDTAALNALIRHIELLKKQCALPSFADALKDGKQAWSQRIPSMVQAALADVTLQTNPRVADASAMQELLEELL</sequence>
<proteinExistence type="inferred from homology"/>
<gene>
    <name evidence="3" type="primary">pduQ</name>
</gene>
<dbReference type="EC" id="1.1.-.-" evidence="1"/>
<dbReference type="EMBL" id="AM498294">
    <property type="protein sequence ID" value="CAM57297.1"/>
    <property type="molecule type" value="Genomic_DNA"/>
</dbReference>
<dbReference type="SMR" id="B1VB76"/>
<dbReference type="UniPathway" id="UPA00621"/>
<dbReference type="GO" id="GO:0031469">
    <property type="term" value="C:bacterial microcompartment"/>
    <property type="evidence" value="ECO:0007669"/>
    <property type="project" value="UniProtKB-SubCell"/>
</dbReference>
<dbReference type="GO" id="GO:0004022">
    <property type="term" value="F:alcohol dehydrogenase (NAD+) activity"/>
    <property type="evidence" value="ECO:0007669"/>
    <property type="project" value="TreeGrafter"/>
</dbReference>
<dbReference type="GO" id="GO:0046872">
    <property type="term" value="F:metal ion binding"/>
    <property type="evidence" value="ECO:0007669"/>
    <property type="project" value="InterPro"/>
</dbReference>
<dbReference type="GO" id="GO:0051144">
    <property type="term" value="P:propanediol catabolic process"/>
    <property type="evidence" value="ECO:0007669"/>
    <property type="project" value="UniProtKB-UniPathway"/>
</dbReference>
<dbReference type="CDD" id="cd08180">
    <property type="entry name" value="PDD"/>
    <property type="match status" value="1"/>
</dbReference>
<dbReference type="FunFam" id="3.40.50.1970:FF:000003">
    <property type="entry name" value="Alcohol dehydrogenase, iron-containing"/>
    <property type="match status" value="1"/>
</dbReference>
<dbReference type="FunFam" id="1.20.1090.10:FF:000001">
    <property type="entry name" value="Aldehyde-alcohol dehydrogenase"/>
    <property type="match status" value="1"/>
</dbReference>
<dbReference type="Gene3D" id="3.40.50.1970">
    <property type="match status" value="1"/>
</dbReference>
<dbReference type="Gene3D" id="1.20.1090.10">
    <property type="entry name" value="Dehydroquinate synthase-like - alpha domain"/>
    <property type="match status" value="1"/>
</dbReference>
<dbReference type="InterPro" id="IPR001670">
    <property type="entry name" value="ADH_Fe/GldA"/>
</dbReference>
<dbReference type="InterPro" id="IPR056798">
    <property type="entry name" value="ADH_Fe_C"/>
</dbReference>
<dbReference type="InterPro" id="IPR018211">
    <property type="entry name" value="ADH_Fe_CS"/>
</dbReference>
<dbReference type="InterPro" id="IPR039697">
    <property type="entry name" value="Alcohol_dehydrogenase_Fe"/>
</dbReference>
<dbReference type="PANTHER" id="PTHR11496">
    <property type="entry name" value="ALCOHOL DEHYDROGENASE"/>
    <property type="match status" value="1"/>
</dbReference>
<dbReference type="PANTHER" id="PTHR11496:SF83">
    <property type="entry name" value="HYDROXYACID-OXOACID TRANSHYDROGENASE, MITOCHONDRIAL"/>
    <property type="match status" value="1"/>
</dbReference>
<dbReference type="Pfam" id="PF25137">
    <property type="entry name" value="ADH_Fe_C"/>
    <property type="match status" value="1"/>
</dbReference>
<dbReference type="Pfam" id="PF00465">
    <property type="entry name" value="Fe-ADH"/>
    <property type="match status" value="1"/>
</dbReference>
<dbReference type="SUPFAM" id="SSF56796">
    <property type="entry name" value="Dehydroquinate synthase-like"/>
    <property type="match status" value="1"/>
</dbReference>
<dbReference type="PROSITE" id="PS00913">
    <property type="entry name" value="ADH_IRON_1"/>
    <property type="match status" value="1"/>
</dbReference>
<evidence type="ECO:0000250" key="1">
    <source>
        <dbReference type="UniProtKB" id="Q9XDN0"/>
    </source>
</evidence>
<evidence type="ECO:0000269" key="2">
    <source>
    </source>
</evidence>
<evidence type="ECO:0000303" key="3">
    <source>
    </source>
</evidence>
<evidence type="ECO:0000305" key="4"/>
<evidence type="ECO:0000305" key="5">
    <source>
    </source>
</evidence>
<accession>B1VB76</accession>
<comment type="function">
    <text evidence="1">An iron-dependent alcohol dehydrogenase required for optimal 1,2-propanediol (1,2-PD) degradation. NAD(+) and NADH are regenerated internally within the bacterial microcompartment (BMC) dedicated to 1,2-PD degradation by the PduP and PduQ enzymes, which reduce NAD(+) and oxidize NADH respectively, although there must also be cofactor transport across the BMC.</text>
</comment>
<comment type="function">
    <text evidence="2">Expression of a cosmid containing the full 21-gene pdu operon in E.coli allows E.coli to grow on 1,2-propanediol (1,2-PD) with the appearance of bacterial microcompartments (BMC) in its cytoplasm.</text>
</comment>
<comment type="function">
    <text evidence="5">The 1,2-PD-specific bacterial microcompartment (BMC) concentrates low levels of 1,2-PD catabolic enzymes, concentrates volatile reaction intermediates thus enhancing pathway flux and keeps the level of toxic, mutagenic propionaldehyde low.</text>
</comment>
<comment type="catalytic activity">
    <reaction evidence="1">
        <text>1-propanol + NAD(+) = propanal + NADH + H(+)</text>
        <dbReference type="Rhea" id="RHEA:50704"/>
        <dbReference type="ChEBI" id="CHEBI:15378"/>
        <dbReference type="ChEBI" id="CHEBI:17153"/>
        <dbReference type="ChEBI" id="CHEBI:28831"/>
        <dbReference type="ChEBI" id="CHEBI:57540"/>
        <dbReference type="ChEBI" id="CHEBI:57945"/>
    </reaction>
    <physiologicalReaction direction="left-to-right" evidence="1">
        <dbReference type="Rhea" id="RHEA:50705"/>
    </physiologicalReaction>
    <physiologicalReaction direction="right-to-left" evidence="1">
        <dbReference type="Rhea" id="RHEA:50706"/>
    </physiologicalReaction>
</comment>
<comment type="cofactor">
    <cofactor evidence="1">
        <name>Fe cation</name>
        <dbReference type="ChEBI" id="CHEBI:24875"/>
    </cofactor>
</comment>
<comment type="pathway">
    <text evidence="2">Polyol metabolism; 1,2-propanediol degradation.</text>
</comment>
<comment type="subunit">
    <text evidence="1">Interacts with PduP, probably via the N-terminus of PduQ.</text>
</comment>
<comment type="subcellular location">
    <subcellularLocation>
        <location evidence="1">Bacterial microcompartment</location>
    </subcellularLocation>
    <text evidence="1">Probably located inside the BMC shell.</text>
</comment>
<comment type="similarity">
    <text evidence="4">Belongs to the iron-containing alcohol dehydrogenase family.</text>
</comment>
<name>PDUQ_CITFR</name>
<organism>
    <name type="scientific">Citrobacter freundii</name>
    <dbReference type="NCBI Taxonomy" id="546"/>
    <lineage>
        <taxon>Bacteria</taxon>
        <taxon>Pseudomonadati</taxon>
        <taxon>Pseudomonadota</taxon>
        <taxon>Gammaproteobacteria</taxon>
        <taxon>Enterobacterales</taxon>
        <taxon>Enterobacteriaceae</taxon>
        <taxon>Citrobacter</taxon>
        <taxon>Citrobacter freundii complex</taxon>
    </lineage>
</organism>
<feature type="chain" id="PRO_0000454269" description="1-propanol dehydrogenase PduQ">
    <location>
        <begin position="1"/>
        <end position="370"/>
    </location>
</feature>